<accession>A7ME53</accession>
<keyword id="KW-0378">Hydrolase</keyword>
<keyword id="KW-1185">Reference proteome</keyword>
<comment type="function">
    <text evidence="1">Hydrolyzes ureidoacrylate to form aminoacrylate and carbamate. The carbamate hydrolyzes spontaneously, thereby releasing one of the nitrogen atoms of the pyrimidine ring as ammonia and one of its carbon atoms as CO2.</text>
</comment>
<comment type="catalytic activity">
    <reaction evidence="1">
        <text>(Z)-3-ureidoacrylate + H2O + H(+) = (Z)-3-aminoacrylate + NH4(+) + CO2</text>
        <dbReference type="Rhea" id="RHEA:42624"/>
        <dbReference type="ChEBI" id="CHEBI:15377"/>
        <dbReference type="ChEBI" id="CHEBI:15378"/>
        <dbReference type="ChEBI" id="CHEBI:16526"/>
        <dbReference type="ChEBI" id="CHEBI:28938"/>
        <dbReference type="ChEBI" id="CHEBI:59891"/>
        <dbReference type="ChEBI" id="CHEBI:59894"/>
        <dbReference type="EC" id="3.5.1.110"/>
    </reaction>
</comment>
<comment type="catalytic activity">
    <reaction evidence="1">
        <text>(Z)-3-ureidoacrylate + H2O = (Z)-3-aminoacrylate + carbamate + H(+)</text>
        <dbReference type="Rhea" id="RHEA:31603"/>
        <dbReference type="ChEBI" id="CHEBI:13941"/>
        <dbReference type="ChEBI" id="CHEBI:15377"/>
        <dbReference type="ChEBI" id="CHEBI:15378"/>
        <dbReference type="ChEBI" id="CHEBI:59891"/>
        <dbReference type="ChEBI" id="CHEBI:59894"/>
    </reaction>
</comment>
<comment type="catalytic activity">
    <reaction evidence="1">
        <text>(Z)-2-methylureidoacrylate + H2O + H(+) = (Z)-2-methylaminoacrylate + NH4(+) + CO2</text>
        <dbReference type="Rhea" id="RHEA:42620"/>
        <dbReference type="ChEBI" id="CHEBI:15377"/>
        <dbReference type="ChEBI" id="CHEBI:15378"/>
        <dbReference type="ChEBI" id="CHEBI:16526"/>
        <dbReference type="ChEBI" id="CHEBI:28938"/>
        <dbReference type="ChEBI" id="CHEBI:143783"/>
        <dbReference type="ChEBI" id="CHEBI:145735"/>
        <dbReference type="EC" id="3.5.1.110"/>
    </reaction>
</comment>
<comment type="similarity">
    <text evidence="1">Belongs to the isochorismatase family. RutB subfamily.</text>
</comment>
<feature type="chain" id="PRO_0000402654" description="Ureidoacrylate amidohydrolase RutB">
    <location>
        <begin position="1"/>
        <end position="232"/>
    </location>
</feature>
<feature type="active site" description="Proton acceptor" evidence="1">
    <location>
        <position position="26"/>
    </location>
</feature>
<feature type="active site" evidence="1">
    <location>
        <position position="135"/>
    </location>
</feature>
<feature type="active site" description="Nucleophile" evidence="1">
    <location>
        <position position="168"/>
    </location>
</feature>
<reference key="1">
    <citation type="journal article" date="2010" name="PLoS ONE">
        <title>Genome sequence of Cronobacter sakazakii BAA-894 and comparative genomic hybridization analysis with other Cronobacter species.</title>
        <authorList>
            <person name="Kucerova E."/>
            <person name="Clifton S.W."/>
            <person name="Xia X.Q."/>
            <person name="Long F."/>
            <person name="Porwollik S."/>
            <person name="Fulton L."/>
            <person name="Fronick C."/>
            <person name="Minx P."/>
            <person name="Kyung K."/>
            <person name="Warren W."/>
            <person name="Fulton R."/>
            <person name="Feng D."/>
            <person name="Wollam A."/>
            <person name="Shah N."/>
            <person name="Bhonagiri V."/>
            <person name="Nash W.E."/>
            <person name="Hallsworth-Pepin K."/>
            <person name="Wilson R.K."/>
            <person name="McClelland M."/>
            <person name="Forsythe S.J."/>
        </authorList>
    </citation>
    <scope>NUCLEOTIDE SEQUENCE [LARGE SCALE GENOMIC DNA]</scope>
    <source>
        <strain>ATCC BAA-894</strain>
    </source>
</reference>
<protein>
    <recommendedName>
        <fullName evidence="1">Ureidoacrylate amidohydrolase RutB</fullName>
        <ecNumber evidence="1">3.5.1.110</ecNumber>
    </recommendedName>
</protein>
<name>RUTB_CROS8</name>
<gene>
    <name evidence="1" type="primary">rutB</name>
    <name type="ordered locus">ESA_02363</name>
</gene>
<proteinExistence type="inferred from homology"/>
<dbReference type="EC" id="3.5.1.110" evidence="1"/>
<dbReference type="EMBL" id="CP000783">
    <property type="protein sequence ID" value="ABU77610.1"/>
    <property type="molecule type" value="Genomic_DNA"/>
</dbReference>
<dbReference type="RefSeq" id="WP_012125164.1">
    <property type="nucleotide sequence ID" value="NC_009778.1"/>
</dbReference>
<dbReference type="SMR" id="A7ME53"/>
<dbReference type="KEGG" id="esa:ESA_02363"/>
<dbReference type="PATRIC" id="fig|290339.8.peg.2093"/>
<dbReference type="HOGENOM" id="CLU_068979_8_0_6"/>
<dbReference type="Proteomes" id="UP000000260">
    <property type="component" value="Chromosome"/>
</dbReference>
<dbReference type="GO" id="GO:0016811">
    <property type="term" value="F:hydrolase activity, acting on carbon-nitrogen (but not peptide) bonds, in linear amides"/>
    <property type="evidence" value="ECO:0007669"/>
    <property type="project" value="UniProtKB-UniRule"/>
</dbReference>
<dbReference type="GO" id="GO:0019740">
    <property type="term" value="P:nitrogen utilization"/>
    <property type="evidence" value="ECO:0007669"/>
    <property type="project" value="UniProtKB-UniRule"/>
</dbReference>
<dbReference type="GO" id="GO:0006212">
    <property type="term" value="P:uracil catabolic process"/>
    <property type="evidence" value="ECO:0007669"/>
    <property type="project" value="UniProtKB-UniRule"/>
</dbReference>
<dbReference type="CDD" id="cd00431">
    <property type="entry name" value="cysteine_hydrolases"/>
    <property type="match status" value="1"/>
</dbReference>
<dbReference type="Gene3D" id="3.40.50.850">
    <property type="entry name" value="Isochorismatase-like"/>
    <property type="match status" value="1"/>
</dbReference>
<dbReference type="HAMAP" id="MF_00830">
    <property type="entry name" value="RutB"/>
    <property type="match status" value="1"/>
</dbReference>
<dbReference type="InterPro" id="IPR000868">
    <property type="entry name" value="Isochorismatase-like_dom"/>
</dbReference>
<dbReference type="InterPro" id="IPR050272">
    <property type="entry name" value="Isochorismatase-like_hydrls"/>
</dbReference>
<dbReference type="InterPro" id="IPR036380">
    <property type="entry name" value="Isochorismatase-like_sf"/>
</dbReference>
<dbReference type="InterPro" id="IPR019916">
    <property type="entry name" value="RutB"/>
</dbReference>
<dbReference type="NCBIfam" id="TIGR03614">
    <property type="entry name" value="RutB"/>
    <property type="match status" value="1"/>
</dbReference>
<dbReference type="PANTHER" id="PTHR43540:SF6">
    <property type="entry name" value="ISOCHORISMATASE-LIKE DOMAIN-CONTAINING PROTEIN"/>
    <property type="match status" value="1"/>
</dbReference>
<dbReference type="PANTHER" id="PTHR43540">
    <property type="entry name" value="PEROXYUREIDOACRYLATE/UREIDOACRYLATE AMIDOHYDROLASE-RELATED"/>
    <property type="match status" value="1"/>
</dbReference>
<dbReference type="Pfam" id="PF00857">
    <property type="entry name" value="Isochorismatase"/>
    <property type="match status" value="1"/>
</dbReference>
<dbReference type="SUPFAM" id="SSF52499">
    <property type="entry name" value="Isochorismatase-like hydrolases"/>
    <property type="match status" value="1"/>
</dbReference>
<sequence>MNTITLTARPEALTFAPEQSALIVVDMQNAYASQGGYLDLAGFDVSSTAPVIENIKTAVAAAREAGMTIVWFQNGWDSDYLEAGGPGSPNFHKSNALKTMRRCPELHGKLLAKGGWDYQLVDELTPLPGDIVLPKPRYSGFFNTPLDSMLRARNIRHLVFTGIATNVCVESTLRDGFFLEYFGVVLEDATHQAGPPFAQQAALFNIETFFGWVSDVQSFCDALSPEALARIA</sequence>
<evidence type="ECO:0000255" key="1">
    <source>
        <dbReference type="HAMAP-Rule" id="MF_00830"/>
    </source>
</evidence>
<organism>
    <name type="scientific">Cronobacter sakazakii (strain ATCC BAA-894)</name>
    <name type="common">Enterobacter sakazakii</name>
    <dbReference type="NCBI Taxonomy" id="290339"/>
    <lineage>
        <taxon>Bacteria</taxon>
        <taxon>Pseudomonadati</taxon>
        <taxon>Pseudomonadota</taxon>
        <taxon>Gammaproteobacteria</taxon>
        <taxon>Enterobacterales</taxon>
        <taxon>Enterobacteriaceae</taxon>
        <taxon>Cronobacter</taxon>
    </lineage>
</organism>